<keyword id="KW-0066">ATP synthesis</keyword>
<keyword id="KW-0067">ATP-binding</keyword>
<keyword id="KW-0139">CF(1)</keyword>
<keyword id="KW-0150">Chloroplast</keyword>
<keyword id="KW-0375">Hydrogen ion transport</keyword>
<keyword id="KW-0406">Ion transport</keyword>
<keyword id="KW-0472">Membrane</keyword>
<keyword id="KW-0547">Nucleotide-binding</keyword>
<keyword id="KW-0934">Plastid</keyword>
<keyword id="KW-0793">Thylakoid</keyword>
<keyword id="KW-1278">Translocase</keyword>
<keyword id="KW-0813">Transport</keyword>
<name>ATPA_CARPA</name>
<evidence type="ECO:0000255" key="1">
    <source>
        <dbReference type="HAMAP-Rule" id="MF_01346"/>
    </source>
</evidence>
<protein>
    <recommendedName>
        <fullName evidence="1">ATP synthase subunit alpha, chloroplastic</fullName>
        <ecNumber evidence="1">7.1.2.2</ecNumber>
    </recommendedName>
    <alternativeName>
        <fullName evidence="1">ATP synthase F1 sector subunit alpha</fullName>
    </alternativeName>
    <alternativeName>
        <fullName evidence="1">F-ATPase subunit alpha</fullName>
    </alternativeName>
</protein>
<feature type="chain" id="PRO_0000339075" description="ATP synthase subunit alpha, chloroplastic">
    <location>
        <begin position="1"/>
        <end position="505"/>
    </location>
</feature>
<feature type="binding site" evidence="1">
    <location>
        <begin position="170"/>
        <end position="177"/>
    </location>
    <ligand>
        <name>ATP</name>
        <dbReference type="ChEBI" id="CHEBI:30616"/>
    </ligand>
</feature>
<feature type="site" description="Required for activity" evidence="1">
    <location>
        <position position="363"/>
    </location>
</feature>
<dbReference type="EC" id="7.1.2.2" evidence="1"/>
<dbReference type="EMBL" id="EU431223">
    <property type="protein sequence ID" value="ABY86767.1"/>
    <property type="molecule type" value="Genomic_DNA"/>
</dbReference>
<dbReference type="RefSeq" id="YP_001671668.1">
    <property type="nucleotide sequence ID" value="NC_010323.1"/>
</dbReference>
<dbReference type="SMR" id="B1A920"/>
<dbReference type="GeneID" id="5878326"/>
<dbReference type="KEGG" id="cpap:5878326"/>
<dbReference type="OrthoDB" id="9805536at2759"/>
<dbReference type="GO" id="GO:0009535">
    <property type="term" value="C:chloroplast thylakoid membrane"/>
    <property type="evidence" value="ECO:0007669"/>
    <property type="project" value="UniProtKB-SubCell"/>
</dbReference>
<dbReference type="GO" id="GO:0045259">
    <property type="term" value="C:proton-transporting ATP synthase complex"/>
    <property type="evidence" value="ECO:0007669"/>
    <property type="project" value="UniProtKB-KW"/>
</dbReference>
<dbReference type="GO" id="GO:0043531">
    <property type="term" value="F:ADP binding"/>
    <property type="evidence" value="ECO:0007669"/>
    <property type="project" value="TreeGrafter"/>
</dbReference>
<dbReference type="GO" id="GO:0005524">
    <property type="term" value="F:ATP binding"/>
    <property type="evidence" value="ECO:0007669"/>
    <property type="project" value="UniProtKB-UniRule"/>
</dbReference>
<dbReference type="GO" id="GO:0046933">
    <property type="term" value="F:proton-transporting ATP synthase activity, rotational mechanism"/>
    <property type="evidence" value="ECO:0007669"/>
    <property type="project" value="UniProtKB-UniRule"/>
</dbReference>
<dbReference type="CDD" id="cd18113">
    <property type="entry name" value="ATP-synt_F1_alpha_C"/>
    <property type="match status" value="1"/>
</dbReference>
<dbReference type="CDD" id="cd18116">
    <property type="entry name" value="ATP-synt_F1_alpha_N"/>
    <property type="match status" value="1"/>
</dbReference>
<dbReference type="CDD" id="cd01132">
    <property type="entry name" value="F1-ATPase_alpha_CD"/>
    <property type="match status" value="1"/>
</dbReference>
<dbReference type="FunFam" id="1.20.150.20:FF:000001">
    <property type="entry name" value="ATP synthase subunit alpha"/>
    <property type="match status" value="1"/>
</dbReference>
<dbReference type="FunFam" id="2.40.30.20:FF:000001">
    <property type="entry name" value="ATP synthase subunit alpha"/>
    <property type="match status" value="1"/>
</dbReference>
<dbReference type="FunFam" id="3.40.50.300:FF:000002">
    <property type="entry name" value="ATP synthase subunit alpha"/>
    <property type="match status" value="1"/>
</dbReference>
<dbReference type="Gene3D" id="2.40.30.20">
    <property type="match status" value="1"/>
</dbReference>
<dbReference type="Gene3D" id="1.20.150.20">
    <property type="entry name" value="ATP synthase alpha/beta chain, C-terminal domain"/>
    <property type="match status" value="1"/>
</dbReference>
<dbReference type="Gene3D" id="3.40.50.300">
    <property type="entry name" value="P-loop containing nucleotide triphosphate hydrolases"/>
    <property type="match status" value="1"/>
</dbReference>
<dbReference type="HAMAP" id="MF_01346">
    <property type="entry name" value="ATP_synth_alpha_bact"/>
    <property type="match status" value="1"/>
</dbReference>
<dbReference type="InterPro" id="IPR023366">
    <property type="entry name" value="ATP_synth_asu-like_sf"/>
</dbReference>
<dbReference type="InterPro" id="IPR000793">
    <property type="entry name" value="ATP_synth_asu_C"/>
</dbReference>
<dbReference type="InterPro" id="IPR038376">
    <property type="entry name" value="ATP_synth_asu_C_sf"/>
</dbReference>
<dbReference type="InterPro" id="IPR033732">
    <property type="entry name" value="ATP_synth_F1_a_nt-bd_dom"/>
</dbReference>
<dbReference type="InterPro" id="IPR005294">
    <property type="entry name" value="ATP_synth_F1_asu"/>
</dbReference>
<dbReference type="InterPro" id="IPR020003">
    <property type="entry name" value="ATPase_a/bsu_AS"/>
</dbReference>
<dbReference type="InterPro" id="IPR004100">
    <property type="entry name" value="ATPase_F1/V1/A1_a/bsu_N"/>
</dbReference>
<dbReference type="InterPro" id="IPR036121">
    <property type="entry name" value="ATPase_F1/V1/A1_a/bsu_N_sf"/>
</dbReference>
<dbReference type="InterPro" id="IPR000194">
    <property type="entry name" value="ATPase_F1/V1/A1_a/bsu_nucl-bd"/>
</dbReference>
<dbReference type="InterPro" id="IPR027417">
    <property type="entry name" value="P-loop_NTPase"/>
</dbReference>
<dbReference type="NCBIfam" id="TIGR00962">
    <property type="entry name" value="atpA"/>
    <property type="match status" value="1"/>
</dbReference>
<dbReference type="NCBIfam" id="NF009884">
    <property type="entry name" value="PRK13343.1"/>
    <property type="match status" value="1"/>
</dbReference>
<dbReference type="PANTHER" id="PTHR48082">
    <property type="entry name" value="ATP SYNTHASE SUBUNIT ALPHA, MITOCHONDRIAL"/>
    <property type="match status" value="1"/>
</dbReference>
<dbReference type="PANTHER" id="PTHR48082:SF2">
    <property type="entry name" value="ATP SYNTHASE SUBUNIT ALPHA, MITOCHONDRIAL"/>
    <property type="match status" value="1"/>
</dbReference>
<dbReference type="Pfam" id="PF00006">
    <property type="entry name" value="ATP-synt_ab"/>
    <property type="match status" value="1"/>
</dbReference>
<dbReference type="Pfam" id="PF00306">
    <property type="entry name" value="ATP-synt_ab_C"/>
    <property type="match status" value="1"/>
</dbReference>
<dbReference type="Pfam" id="PF02874">
    <property type="entry name" value="ATP-synt_ab_N"/>
    <property type="match status" value="1"/>
</dbReference>
<dbReference type="PIRSF" id="PIRSF039088">
    <property type="entry name" value="F_ATPase_subunit_alpha"/>
    <property type="match status" value="1"/>
</dbReference>
<dbReference type="SUPFAM" id="SSF47917">
    <property type="entry name" value="C-terminal domain of alpha and beta subunits of F1 ATP synthase"/>
    <property type="match status" value="1"/>
</dbReference>
<dbReference type="SUPFAM" id="SSF50615">
    <property type="entry name" value="N-terminal domain of alpha and beta subunits of F1 ATP synthase"/>
    <property type="match status" value="1"/>
</dbReference>
<dbReference type="SUPFAM" id="SSF52540">
    <property type="entry name" value="P-loop containing nucleoside triphosphate hydrolases"/>
    <property type="match status" value="1"/>
</dbReference>
<dbReference type="PROSITE" id="PS00152">
    <property type="entry name" value="ATPASE_ALPHA_BETA"/>
    <property type="match status" value="1"/>
</dbReference>
<reference key="1">
    <citation type="journal article" date="2008" name="Nature">
        <title>The draft genome of the transgenic tropical fruit tree papaya (Carica papaya Linnaeus).</title>
        <authorList>
            <person name="Ming R."/>
            <person name="Hou S."/>
            <person name="Feng Y."/>
            <person name="Yu Q."/>
            <person name="Dionne-Laporte A."/>
            <person name="Saw J.H."/>
            <person name="Senin P."/>
            <person name="Wang W."/>
            <person name="Ly B.V."/>
            <person name="Lewis K.L."/>
            <person name="Salzberg S.L."/>
            <person name="Feng L."/>
            <person name="Jones M.R."/>
            <person name="Skelton R.L."/>
            <person name="Murray J.E."/>
            <person name="Chen C."/>
            <person name="Qian W."/>
            <person name="Shen J."/>
            <person name="Du P."/>
            <person name="Eustice M."/>
            <person name="Tong E."/>
            <person name="Tang H."/>
            <person name="Lyons E."/>
            <person name="Paull R.E."/>
            <person name="Michael T.P."/>
            <person name="Wall K."/>
            <person name="Rice D.W."/>
            <person name="Albert H."/>
            <person name="Wang M.L."/>
            <person name="Zhu Y.J."/>
            <person name="Schatz M."/>
            <person name="Nagarajan N."/>
            <person name="Acob R.A."/>
            <person name="Guan P."/>
            <person name="Blas A."/>
            <person name="Wai C.M."/>
            <person name="Ackerman C.M."/>
            <person name="Ren Y."/>
            <person name="Liu C."/>
            <person name="Wang J."/>
            <person name="Wang J."/>
            <person name="Na J.K."/>
            <person name="Shakirov E.V."/>
            <person name="Haas B."/>
            <person name="Thimmapuram J."/>
            <person name="Nelson D."/>
            <person name="Wang X."/>
            <person name="Bowers J.E."/>
            <person name="Gschwend A.R."/>
            <person name="Delcher A.L."/>
            <person name="Singh R."/>
            <person name="Suzuki J.Y."/>
            <person name="Tripathi S."/>
            <person name="Neupane K."/>
            <person name="Wei H."/>
            <person name="Irikura B."/>
            <person name="Paidi M."/>
            <person name="Jiang N."/>
            <person name="Zhang W."/>
            <person name="Presting G."/>
            <person name="Windsor A."/>
            <person name="Navajas-Perez R."/>
            <person name="Torres M.J."/>
            <person name="Feltus F.A."/>
            <person name="Porter B."/>
            <person name="Li Y."/>
            <person name="Burroughs A.M."/>
            <person name="Luo M.C."/>
            <person name="Liu L."/>
            <person name="Christopher D.A."/>
            <person name="Mount S.M."/>
            <person name="Moore P.H."/>
            <person name="Sugimura T."/>
            <person name="Jiang J."/>
            <person name="Schuler M.A."/>
            <person name="Friedman V."/>
            <person name="Mitchell-Olds T."/>
            <person name="Shippen D.E."/>
            <person name="dePamphilis C.W."/>
            <person name="Palmer J.D."/>
            <person name="Freeling M."/>
            <person name="Paterson A.H."/>
            <person name="Gonsalves D."/>
            <person name="Wang L."/>
            <person name="Alam M."/>
        </authorList>
    </citation>
    <scope>NUCLEOTIDE SEQUENCE [LARGE SCALE GENOMIC DNA]</scope>
    <source>
        <strain>cv. SunUp</strain>
    </source>
</reference>
<comment type="function">
    <text evidence="1">Produces ATP from ADP in the presence of a proton gradient across the membrane. The alpha chain is a regulatory subunit.</text>
</comment>
<comment type="catalytic activity">
    <reaction evidence="1">
        <text>ATP + H2O + 4 H(+)(in) = ADP + phosphate + 5 H(+)(out)</text>
        <dbReference type="Rhea" id="RHEA:57720"/>
        <dbReference type="ChEBI" id="CHEBI:15377"/>
        <dbReference type="ChEBI" id="CHEBI:15378"/>
        <dbReference type="ChEBI" id="CHEBI:30616"/>
        <dbReference type="ChEBI" id="CHEBI:43474"/>
        <dbReference type="ChEBI" id="CHEBI:456216"/>
        <dbReference type="EC" id="7.1.2.2"/>
    </reaction>
</comment>
<comment type="subunit">
    <text evidence="1">F-type ATPases have 2 components, CF(1) - the catalytic core - and CF(0) - the membrane proton channel. CF(1) has five subunits: alpha(3), beta(3), gamma(1), delta(1), epsilon(1). CF(0) has four main subunits: a, b, b' and c.</text>
</comment>
<comment type="subcellular location">
    <subcellularLocation>
        <location evidence="1">Plastid</location>
        <location evidence="1">Chloroplast thylakoid membrane</location>
        <topology evidence="1">Peripheral membrane protein</topology>
    </subcellularLocation>
</comment>
<comment type="similarity">
    <text evidence="1">Belongs to the ATPase alpha/beta chains family.</text>
</comment>
<accession>B1A920</accession>
<proteinExistence type="inferred from homology"/>
<gene>
    <name evidence="1" type="primary">atpA</name>
</gene>
<sequence length="505" mass="55171">MVTIRADEISNIIRERIEQYNREVKVVTIGTVLQVGDGIARIYGLDEVMAGELVEFEEGTIGIALNLESNNVGVVLMGDGLMIQEGSSVKATGKIAQIPVSEAYLGRVINALAKPIDGRGEISASESRLIESPAPGIISRRSVYEPLQTGLIAIDSMIPIGRGQRELIIGDRQTGKTAVATDTILNQQGQNVICVYVAIGQKASSVAQVVTTLQERGAMDYTIVVAETADSPATLQYLAPYTGAALAEFFMYLKQHTLIIYDDPSKQAQAYRQMSLLLRRPPGREAYPGDVFYLHSRLLERAAKLSSQLGEGSMTALPIVETQSGDVSAYIPTNVISITDGQIFLSADLFNAGIRPAINVGISVSRVGSAAQIKAMKQVAGKLKLELAQFAELEAFAQFASDLDKATQNQLARGQRLRELLKQSQSAPLTVEEQIMTIYTGTNGYLDSLEIGQVRKFLVELRTYLKTNKPQFQEIISSTKTFTEEAETILKEAIQEQMERFLLQE</sequence>
<organism>
    <name type="scientific">Carica papaya</name>
    <name type="common">Papaya</name>
    <dbReference type="NCBI Taxonomy" id="3649"/>
    <lineage>
        <taxon>Eukaryota</taxon>
        <taxon>Viridiplantae</taxon>
        <taxon>Streptophyta</taxon>
        <taxon>Embryophyta</taxon>
        <taxon>Tracheophyta</taxon>
        <taxon>Spermatophyta</taxon>
        <taxon>Magnoliopsida</taxon>
        <taxon>eudicotyledons</taxon>
        <taxon>Gunneridae</taxon>
        <taxon>Pentapetalae</taxon>
        <taxon>rosids</taxon>
        <taxon>malvids</taxon>
        <taxon>Brassicales</taxon>
        <taxon>Caricaceae</taxon>
        <taxon>Carica</taxon>
    </lineage>
</organism>
<geneLocation type="chloroplast"/>